<protein>
    <recommendedName>
        <fullName evidence="1">ATP synthase subunit alpha</fullName>
        <ecNumber evidence="1">7.1.2.2</ecNumber>
    </recommendedName>
    <alternativeName>
        <fullName evidence="1">ATP synthase F1 sector subunit alpha</fullName>
    </alternativeName>
    <alternativeName>
        <fullName evidence="1">F-ATPase subunit alpha</fullName>
    </alternativeName>
</protein>
<proteinExistence type="inferred from homology"/>
<evidence type="ECO:0000255" key="1">
    <source>
        <dbReference type="HAMAP-Rule" id="MF_01346"/>
    </source>
</evidence>
<keyword id="KW-0066">ATP synthesis</keyword>
<keyword id="KW-0067">ATP-binding</keyword>
<keyword id="KW-0997">Cell inner membrane</keyword>
<keyword id="KW-1003">Cell membrane</keyword>
<keyword id="KW-0139">CF(1)</keyword>
<keyword id="KW-0375">Hydrogen ion transport</keyword>
<keyword id="KW-0406">Ion transport</keyword>
<keyword id="KW-0472">Membrane</keyword>
<keyword id="KW-0547">Nucleotide-binding</keyword>
<keyword id="KW-1278">Translocase</keyword>
<keyword id="KW-0813">Transport</keyword>
<feature type="chain" id="PRO_0000238348" description="ATP synthase subunit alpha">
    <location>
        <begin position="1"/>
        <end position="513"/>
    </location>
</feature>
<feature type="binding site" evidence="1">
    <location>
        <begin position="169"/>
        <end position="176"/>
    </location>
    <ligand>
        <name>ATP</name>
        <dbReference type="ChEBI" id="CHEBI:30616"/>
    </ligand>
</feature>
<feature type="site" description="Required for activity" evidence="1">
    <location>
        <position position="373"/>
    </location>
</feature>
<accession>Q5PKX0</accession>
<comment type="function">
    <text evidence="1">Produces ATP from ADP in the presence of a proton gradient across the membrane. The alpha chain is a regulatory subunit.</text>
</comment>
<comment type="catalytic activity">
    <reaction evidence="1">
        <text>ATP + H2O + 4 H(+)(in) = ADP + phosphate + 5 H(+)(out)</text>
        <dbReference type="Rhea" id="RHEA:57720"/>
        <dbReference type="ChEBI" id="CHEBI:15377"/>
        <dbReference type="ChEBI" id="CHEBI:15378"/>
        <dbReference type="ChEBI" id="CHEBI:30616"/>
        <dbReference type="ChEBI" id="CHEBI:43474"/>
        <dbReference type="ChEBI" id="CHEBI:456216"/>
        <dbReference type="EC" id="7.1.2.2"/>
    </reaction>
</comment>
<comment type="subunit">
    <text evidence="1">F-type ATPases have 2 components, CF(1) - the catalytic core - and CF(0) - the membrane proton channel. CF(1) has five subunits: alpha(3), beta(3), gamma(1), delta(1), epsilon(1). CF(0) has three main subunits: a(1), b(2) and c(9-12). The alpha and beta chains form an alternating ring which encloses part of the gamma chain. CF(1) is attached to CF(0) by a central stalk formed by the gamma and epsilon chains, while a peripheral stalk is formed by the delta and b chains.</text>
</comment>
<comment type="subcellular location">
    <subcellularLocation>
        <location evidence="1">Cell inner membrane</location>
        <topology evidence="1">Peripheral membrane protein</topology>
    </subcellularLocation>
</comment>
<comment type="similarity">
    <text evidence="1">Belongs to the ATPase alpha/beta chains family.</text>
</comment>
<dbReference type="EC" id="7.1.2.2" evidence="1"/>
<dbReference type="EMBL" id="CP000026">
    <property type="protein sequence ID" value="AAV79498.1"/>
    <property type="molecule type" value="Genomic_DNA"/>
</dbReference>
<dbReference type="RefSeq" id="WP_001176751.1">
    <property type="nucleotide sequence ID" value="NC_006511.1"/>
</dbReference>
<dbReference type="SMR" id="Q5PKX0"/>
<dbReference type="GeneID" id="66758156"/>
<dbReference type="KEGG" id="spt:SPA3706"/>
<dbReference type="HOGENOM" id="CLU_010091_2_1_6"/>
<dbReference type="Proteomes" id="UP000008185">
    <property type="component" value="Chromosome"/>
</dbReference>
<dbReference type="GO" id="GO:0005886">
    <property type="term" value="C:plasma membrane"/>
    <property type="evidence" value="ECO:0007669"/>
    <property type="project" value="UniProtKB-SubCell"/>
</dbReference>
<dbReference type="GO" id="GO:0045259">
    <property type="term" value="C:proton-transporting ATP synthase complex"/>
    <property type="evidence" value="ECO:0007669"/>
    <property type="project" value="UniProtKB-KW"/>
</dbReference>
<dbReference type="GO" id="GO:0043531">
    <property type="term" value="F:ADP binding"/>
    <property type="evidence" value="ECO:0007669"/>
    <property type="project" value="TreeGrafter"/>
</dbReference>
<dbReference type="GO" id="GO:0005524">
    <property type="term" value="F:ATP binding"/>
    <property type="evidence" value="ECO:0007669"/>
    <property type="project" value="UniProtKB-UniRule"/>
</dbReference>
<dbReference type="GO" id="GO:0046933">
    <property type="term" value="F:proton-transporting ATP synthase activity, rotational mechanism"/>
    <property type="evidence" value="ECO:0007669"/>
    <property type="project" value="UniProtKB-UniRule"/>
</dbReference>
<dbReference type="CDD" id="cd18113">
    <property type="entry name" value="ATP-synt_F1_alpha_C"/>
    <property type="match status" value="1"/>
</dbReference>
<dbReference type="CDD" id="cd18116">
    <property type="entry name" value="ATP-synt_F1_alpha_N"/>
    <property type="match status" value="1"/>
</dbReference>
<dbReference type="CDD" id="cd01132">
    <property type="entry name" value="F1-ATPase_alpha_CD"/>
    <property type="match status" value="1"/>
</dbReference>
<dbReference type="FunFam" id="1.20.150.20:FF:000001">
    <property type="entry name" value="ATP synthase subunit alpha"/>
    <property type="match status" value="1"/>
</dbReference>
<dbReference type="FunFam" id="2.40.30.20:FF:000001">
    <property type="entry name" value="ATP synthase subunit alpha"/>
    <property type="match status" value="1"/>
</dbReference>
<dbReference type="FunFam" id="3.40.50.300:FF:000002">
    <property type="entry name" value="ATP synthase subunit alpha"/>
    <property type="match status" value="1"/>
</dbReference>
<dbReference type="Gene3D" id="2.40.30.20">
    <property type="match status" value="1"/>
</dbReference>
<dbReference type="Gene3D" id="1.20.150.20">
    <property type="entry name" value="ATP synthase alpha/beta chain, C-terminal domain"/>
    <property type="match status" value="1"/>
</dbReference>
<dbReference type="Gene3D" id="3.40.50.300">
    <property type="entry name" value="P-loop containing nucleotide triphosphate hydrolases"/>
    <property type="match status" value="1"/>
</dbReference>
<dbReference type="HAMAP" id="MF_01346">
    <property type="entry name" value="ATP_synth_alpha_bact"/>
    <property type="match status" value="1"/>
</dbReference>
<dbReference type="InterPro" id="IPR023366">
    <property type="entry name" value="ATP_synth_asu-like_sf"/>
</dbReference>
<dbReference type="InterPro" id="IPR000793">
    <property type="entry name" value="ATP_synth_asu_C"/>
</dbReference>
<dbReference type="InterPro" id="IPR038376">
    <property type="entry name" value="ATP_synth_asu_C_sf"/>
</dbReference>
<dbReference type="InterPro" id="IPR033732">
    <property type="entry name" value="ATP_synth_F1_a_nt-bd_dom"/>
</dbReference>
<dbReference type="InterPro" id="IPR005294">
    <property type="entry name" value="ATP_synth_F1_asu"/>
</dbReference>
<dbReference type="InterPro" id="IPR020003">
    <property type="entry name" value="ATPase_a/bsu_AS"/>
</dbReference>
<dbReference type="InterPro" id="IPR004100">
    <property type="entry name" value="ATPase_F1/V1/A1_a/bsu_N"/>
</dbReference>
<dbReference type="InterPro" id="IPR036121">
    <property type="entry name" value="ATPase_F1/V1/A1_a/bsu_N_sf"/>
</dbReference>
<dbReference type="InterPro" id="IPR000194">
    <property type="entry name" value="ATPase_F1/V1/A1_a/bsu_nucl-bd"/>
</dbReference>
<dbReference type="InterPro" id="IPR027417">
    <property type="entry name" value="P-loop_NTPase"/>
</dbReference>
<dbReference type="NCBIfam" id="TIGR00962">
    <property type="entry name" value="atpA"/>
    <property type="match status" value="1"/>
</dbReference>
<dbReference type="NCBIfam" id="NF009884">
    <property type="entry name" value="PRK13343.1"/>
    <property type="match status" value="1"/>
</dbReference>
<dbReference type="PANTHER" id="PTHR48082">
    <property type="entry name" value="ATP SYNTHASE SUBUNIT ALPHA, MITOCHONDRIAL"/>
    <property type="match status" value="1"/>
</dbReference>
<dbReference type="PANTHER" id="PTHR48082:SF2">
    <property type="entry name" value="ATP SYNTHASE SUBUNIT ALPHA, MITOCHONDRIAL"/>
    <property type="match status" value="1"/>
</dbReference>
<dbReference type="Pfam" id="PF00006">
    <property type="entry name" value="ATP-synt_ab"/>
    <property type="match status" value="1"/>
</dbReference>
<dbReference type="Pfam" id="PF00306">
    <property type="entry name" value="ATP-synt_ab_C"/>
    <property type="match status" value="1"/>
</dbReference>
<dbReference type="Pfam" id="PF02874">
    <property type="entry name" value="ATP-synt_ab_N"/>
    <property type="match status" value="1"/>
</dbReference>
<dbReference type="SUPFAM" id="SSF47917">
    <property type="entry name" value="C-terminal domain of alpha and beta subunits of F1 ATP synthase"/>
    <property type="match status" value="1"/>
</dbReference>
<dbReference type="SUPFAM" id="SSF50615">
    <property type="entry name" value="N-terminal domain of alpha and beta subunits of F1 ATP synthase"/>
    <property type="match status" value="1"/>
</dbReference>
<dbReference type="SUPFAM" id="SSF52540">
    <property type="entry name" value="P-loop containing nucleoside triphosphate hydrolases"/>
    <property type="match status" value="1"/>
</dbReference>
<dbReference type="PROSITE" id="PS00152">
    <property type="entry name" value="ATPASE_ALPHA_BETA"/>
    <property type="match status" value="1"/>
</dbReference>
<name>ATPA_SALPA</name>
<sequence length="513" mass="55113">MQLNSTEISELIKQRIAQFNVVSEAHNEGTIVSVSDGVIRIHGLADCMQGEMISLPGNRYAIALNLERDSVGAVVMGPYADLAEGMKVKCTGRILEVPVGRGLLGRVVNTLGAPIDGKGPVDNDGFSAVEAIAPGVIDRQSVDQPVQTGYKAVDSMIPIGRGQRELIIGDRQTGKTALAIDAIINQRDSGIKCIYVAIGQKASTISNVVRKLEEHGALANTIVVVATASESAALQYLAPYAGCAMGEYFRDRGEDALIIYDDLSKQAVAYRQISLLLRRPPGREAFPGDVFYLHSRLLERAARVNADYVEAFTKGEVKGKTGSLTALPIIETQAGDVSAFVPTNVISITDGQIFLESNLFNAGIRPAVNPGISVSRVGGAAQTKIMKKLSGGIRTALAQYRELAAFSQFASDLDDATRKQLDHGQKVTELLKQKQYAPMSVAQQSLVLFAAERGYLADVELAKIGSFEAALLAYVDRDHAPLMQEINQSGGYNDEIEGKLKGILDSFKATQSW</sequence>
<reference key="1">
    <citation type="journal article" date="2004" name="Nat. Genet.">
        <title>Comparison of genome degradation in Paratyphi A and Typhi, human-restricted serovars of Salmonella enterica that cause typhoid.</title>
        <authorList>
            <person name="McClelland M."/>
            <person name="Sanderson K.E."/>
            <person name="Clifton S.W."/>
            <person name="Latreille P."/>
            <person name="Porwollik S."/>
            <person name="Sabo A."/>
            <person name="Meyer R."/>
            <person name="Bieri T."/>
            <person name="Ozersky P."/>
            <person name="McLellan M."/>
            <person name="Harkins C.R."/>
            <person name="Wang C."/>
            <person name="Nguyen C."/>
            <person name="Berghoff A."/>
            <person name="Elliott G."/>
            <person name="Kohlberg S."/>
            <person name="Strong C."/>
            <person name="Du F."/>
            <person name="Carter J."/>
            <person name="Kremizki C."/>
            <person name="Layman D."/>
            <person name="Leonard S."/>
            <person name="Sun H."/>
            <person name="Fulton L."/>
            <person name="Nash W."/>
            <person name="Miner T."/>
            <person name="Minx P."/>
            <person name="Delehaunty K."/>
            <person name="Fronick C."/>
            <person name="Magrini V."/>
            <person name="Nhan M."/>
            <person name="Warren W."/>
            <person name="Florea L."/>
            <person name="Spieth J."/>
            <person name="Wilson R.K."/>
        </authorList>
    </citation>
    <scope>NUCLEOTIDE SEQUENCE [LARGE SCALE GENOMIC DNA]</scope>
    <source>
        <strain>ATCC 9150 / SARB42</strain>
    </source>
</reference>
<organism>
    <name type="scientific">Salmonella paratyphi A (strain ATCC 9150 / SARB42)</name>
    <dbReference type="NCBI Taxonomy" id="295319"/>
    <lineage>
        <taxon>Bacteria</taxon>
        <taxon>Pseudomonadati</taxon>
        <taxon>Pseudomonadota</taxon>
        <taxon>Gammaproteobacteria</taxon>
        <taxon>Enterobacterales</taxon>
        <taxon>Enterobacteriaceae</taxon>
        <taxon>Salmonella</taxon>
    </lineage>
</organism>
<gene>
    <name evidence="1" type="primary">atpA</name>
    <name type="ordered locus">SPA3706</name>
</gene>